<comment type="function">
    <text evidence="1">One of two assembly initiator proteins, it binds directly to the 5'-end of the 23S rRNA, where it nucleates assembly of the 50S subunit.</text>
</comment>
<comment type="function">
    <text evidence="1">One of the proteins that surrounds the polypeptide exit tunnel on the outside of the subunit.</text>
</comment>
<comment type="subunit">
    <text evidence="1">Part of the 50S ribosomal subunit.</text>
</comment>
<comment type="similarity">
    <text evidence="1">Belongs to the universal ribosomal protein uL24 family.</text>
</comment>
<gene>
    <name evidence="1" type="primary">rplX</name>
    <name type="ordered locus">THA_1226</name>
</gene>
<accession>B7IHV7</accession>
<sequence>MARKIRKGDTVMVLSGKDKGKTGEVVRVIPKEDKVVVRGVNVVKRHQRPNAQMRQGGIIEKESPIYACKVALVCPSCGKATRVGFRFLEDGTKVRYCKKCGEVIDK</sequence>
<keyword id="KW-1185">Reference proteome</keyword>
<keyword id="KW-0687">Ribonucleoprotein</keyword>
<keyword id="KW-0689">Ribosomal protein</keyword>
<keyword id="KW-0694">RNA-binding</keyword>
<keyword id="KW-0699">rRNA-binding</keyword>
<reference key="1">
    <citation type="journal article" date="2009" name="J. Bacteriol.">
        <title>The genome of Thermosipho africanus TCF52B: lateral genetic connections to the Firmicutes and Archaea.</title>
        <authorList>
            <person name="Nesboe C.L."/>
            <person name="Bapteste E."/>
            <person name="Curtis B."/>
            <person name="Dahle H."/>
            <person name="Lopez P."/>
            <person name="Macleod D."/>
            <person name="Dlutek M."/>
            <person name="Bowman S."/>
            <person name="Zhaxybayeva O."/>
            <person name="Birkeland N.-K."/>
            <person name="Doolittle W.F."/>
        </authorList>
    </citation>
    <scope>NUCLEOTIDE SEQUENCE [LARGE SCALE GENOMIC DNA]</scope>
    <source>
        <strain>TCF52B</strain>
    </source>
</reference>
<feature type="chain" id="PRO_1000142049" description="Large ribosomal subunit protein uL24">
    <location>
        <begin position="1"/>
        <end position="106"/>
    </location>
</feature>
<proteinExistence type="inferred from homology"/>
<protein>
    <recommendedName>
        <fullName evidence="1">Large ribosomal subunit protein uL24</fullName>
    </recommendedName>
    <alternativeName>
        <fullName evidence="2">50S ribosomal protein L24</fullName>
    </alternativeName>
</protein>
<organism>
    <name type="scientific">Thermosipho africanus (strain TCF52B)</name>
    <dbReference type="NCBI Taxonomy" id="484019"/>
    <lineage>
        <taxon>Bacteria</taxon>
        <taxon>Thermotogati</taxon>
        <taxon>Thermotogota</taxon>
        <taxon>Thermotogae</taxon>
        <taxon>Thermotogales</taxon>
        <taxon>Fervidobacteriaceae</taxon>
        <taxon>Thermosipho</taxon>
    </lineage>
</organism>
<name>RL24_THEAB</name>
<evidence type="ECO:0000255" key="1">
    <source>
        <dbReference type="HAMAP-Rule" id="MF_01326"/>
    </source>
</evidence>
<evidence type="ECO:0000305" key="2"/>
<dbReference type="EMBL" id="CP001185">
    <property type="protein sequence ID" value="ACJ75671.1"/>
    <property type="molecule type" value="Genomic_DNA"/>
</dbReference>
<dbReference type="RefSeq" id="WP_004101460.1">
    <property type="nucleotide sequence ID" value="NC_011653.1"/>
</dbReference>
<dbReference type="SMR" id="B7IHV7"/>
<dbReference type="STRING" id="484019.THA_1226"/>
<dbReference type="KEGG" id="taf:THA_1226"/>
<dbReference type="eggNOG" id="COG0198">
    <property type="taxonomic scope" value="Bacteria"/>
</dbReference>
<dbReference type="HOGENOM" id="CLU_093315_2_0_0"/>
<dbReference type="OrthoDB" id="9807419at2"/>
<dbReference type="Proteomes" id="UP000002453">
    <property type="component" value="Chromosome"/>
</dbReference>
<dbReference type="GO" id="GO:1990904">
    <property type="term" value="C:ribonucleoprotein complex"/>
    <property type="evidence" value="ECO:0007669"/>
    <property type="project" value="UniProtKB-KW"/>
</dbReference>
<dbReference type="GO" id="GO:0005840">
    <property type="term" value="C:ribosome"/>
    <property type="evidence" value="ECO:0007669"/>
    <property type="project" value="UniProtKB-KW"/>
</dbReference>
<dbReference type="GO" id="GO:0019843">
    <property type="term" value="F:rRNA binding"/>
    <property type="evidence" value="ECO:0007669"/>
    <property type="project" value="UniProtKB-UniRule"/>
</dbReference>
<dbReference type="GO" id="GO:0003735">
    <property type="term" value="F:structural constituent of ribosome"/>
    <property type="evidence" value="ECO:0007669"/>
    <property type="project" value="InterPro"/>
</dbReference>
<dbReference type="GO" id="GO:0006412">
    <property type="term" value="P:translation"/>
    <property type="evidence" value="ECO:0007669"/>
    <property type="project" value="UniProtKB-UniRule"/>
</dbReference>
<dbReference type="CDD" id="cd06089">
    <property type="entry name" value="KOW_RPL26"/>
    <property type="match status" value="1"/>
</dbReference>
<dbReference type="FunFam" id="2.30.30.30:FF:000004">
    <property type="entry name" value="50S ribosomal protein L24"/>
    <property type="match status" value="1"/>
</dbReference>
<dbReference type="Gene3D" id="2.30.30.30">
    <property type="match status" value="1"/>
</dbReference>
<dbReference type="HAMAP" id="MF_01326_B">
    <property type="entry name" value="Ribosomal_uL24_B"/>
    <property type="match status" value="1"/>
</dbReference>
<dbReference type="InterPro" id="IPR005824">
    <property type="entry name" value="KOW"/>
</dbReference>
<dbReference type="InterPro" id="IPR014722">
    <property type="entry name" value="Rib_uL2_dom2"/>
</dbReference>
<dbReference type="InterPro" id="IPR003256">
    <property type="entry name" value="Ribosomal_uL24"/>
</dbReference>
<dbReference type="InterPro" id="IPR005825">
    <property type="entry name" value="Ribosomal_uL24_CS"/>
</dbReference>
<dbReference type="InterPro" id="IPR041988">
    <property type="entry name" value="Ribosomal_uL24_KOW"/>
</dbReference>
<dbReference type="InterPro" id="IPR008991">
    <property type="entry name" value="Translation_prot_SH3-like_sf"/>
</dbReference>
<dbReference type="NCBIfam" id="TIGR01079">
    <property type="entry name" value="rplX_bact"/>
    <property type="match status" value="1"/>
</dbReference>
<dbReference type="PANTHER" id="PTHR12903">
    <property type="entry name" value="MITOCHONDRIAL RIBOSOMAL PROTEIN L24"/>
    <property type="match status" value="1"/>
</dbReference>
<dbReference type="Pfam" id="PF00467">
    <property type="entry name" value="KOW"/>
    <property type="match status" value="1"/>
</dbReference>
<dbReference type="Pfam" id="PF17136">
    <property type="entry name" value="ribosomal_L24"/>
    <property type="match status" value="1"/>
</dbReference>
<dbReference type="SMART" id="SM00739">
    <property type="entry name" value="KOW"/>
    <property type="match status" value="1"/>
</dbReference>
<dbReference type="SUPFAM" id="SSF50104">
    <property type="entry name" value="Translation proteins SH3-like domain"/>
    <property type="match status" value="1"/>
</dbReference>
<dbReference type="PROSITE" id="PS01108">
    <property type="entry name" value="RIBOSOMAL_L24"/>
    <property type="match status" value="1"/>
</dbReference>